<sequence>MSSIGGLRPAAGEQPGVGPHLQAVGGALLLCGLAVLLDWVWLQRQRAGGIPPGPKPRPLVGNFGYLLLPRFLRLHFWLGSGSQTDTVGRHVYLARLARVYGNIFSFFIGHRLVVVLSDFQSVREALVQQAEVFSDRPRMPLISILTKEKGIVFAHYGPIWKQQRRFSHSTLRHFGLGKLSLEPRIIEEFAYVKAEMQKHGEAPFSPFPVISNAVSNIICSLCFGQRFDYTNKEFKKVLDFMSRGLEICLHSQLFLINLCPWFYYLPFGPFKELRQIERDITCFLKNIIKEHQESLDANNPQDFIDMYLLHTQEEKDKCKGTNFDEDYLFYIIGDLFIAGTDTTTNSLLWCLLYMSLNPGVQKKVHEEIERVIGRDRAPSLTDKAQMPYTEATIMEVQRLSMVVPLAIPHMTSEKTVLQGYSIPKGTVVLPNLWSIHRDPVIWEKPDDFCPHRFLDDQGQLLKRETFIPFGIGKRVCMGEQLAKMELFLMFVSLMQSFTFALPEGSEKPIMTGRFGLTLAPHPFNVTVSKR</sequence>
<comment type="function">
    <text evidence="2">A cytochrome P450 monooxygenase involved in the metabolism of arachidonic acid and its conjugates. Mechanistically, uses molecular oxygen inserting one oxygen atom into a substrate, and reducing the second into a water molecule, with two electrons provided by NADPH via cytochrome P450 reductase (CPR; NADPH-ferrihemoprotein reductase). Acts as an omega and omega-1 hydroxylase for arachidonic acid and possibly for other long chain fatty acids. May modulate the arachidonic acid signaling pathway and play a role in other fatty acid signaling processes. May down-regulate the biological activities of N-arachidonoyl-serotonin, an endocannabinoid that has anti-nociceptive effects through inhibition of fatty acid amide hydrolase FAAH, TRPV1 receptor and T-type calcium channels. Catalyzes C-2 oxidation of the indole ring of N-arachidonoyl-serotonin forming a less active product 2-oxo-N-arachidonoyl-serotonin.</text>
</comment>
<comment type="catalytic activity">
    <reaction evidence="2">
        <text>an omega-methyl-long-chain fatty acid + reduced [NADPH--hemoprotein reductase] + O2 = an omega-hydroxy-long-chain fatty acid + oxidized [NADPH--hemoprotein reductase] + H2O + H(+)</text>
        <dbReference type="Rhea" id="RHEA:56748"/>
        <dbReference type="Rhea" id="RHEA-COMP:11964"/>
        <dbReference type="Rhea" id="RHEA-COMP:11965"/>
        <dbReference type="ChEBI" id="CHEBI:15377"/>
        <dbReference type="ChEBI" id="CHEBI:15378"/>
        <dbReference type="ChEBI" id="CHEBI:15379"/>
        <dbReference type="ChEBI" id="CHEBI:57618"/>
        <dbReference type="ChEBI" id="CHEBI:58210"/>
        <dbReference type="ChEBI" id="CHEBI:140991"/>
        <dbReference type="ChEBI" id="CHEBI:140992"/>
        <dbReference type="EC" id="1.14.14.80"/>
    </reaction>
    <physiologicalReaction direction="left-to-right" evidence="2">
        <dbReference type="Rhea" id="RHEA:56749"/>
    </physiologicalReaction>
</comment>
<comment type="catalytic activity">
    <reaction evidence="2">
        <text>(5Z,8Z,11Z,14Z)-eicosatetraenoate + reduced [NADPH--hemoprotein reductase] + O2 = 19-hydroxy-(5Z,8Z,11Z,14Z)-eicosatetraenoate + oxidized [NADPH--hemoprotein reductase] + H2O + H(+)</text>
        <dbReference type="Rhea" id="RHEA:39759"/>
        <dbReference type="Rhea" id="RHEA-COMP:11964"/>
        <dbReference type="Rhea" id="RHEA-COMP:11965"/>
        <dbReference type="ChEBI" id="CHEBI:15377"/>
        <dbReference type="ChEBI" id="CHEBI:15378"/>
        <dbReference type="ChEBI" id="CHEBI:15379"/>
        <dbReference type="ChEBI" id="CHEBI:32395"/>
        <dbReference type="ChEBI" id="CHEBI:57618"/>
        <dbReference type="ChEBI" id="CHEBI:58210"/>
        <dbReference type="ChEBI" id="CHEBI:76627"/>
    </reaction>
    <physiologicalReaction direction="left-to-right" evidence="2">
        <dbReference type="Rhea" id="RHEA:39760"/>
    </physiologicalReaction>
</comment>
<comment type="catalytic activity">
    <reaction evidence="2">
        <text>(5Z,8Z,11Z,14Z)-eicosatetraenoate + reduced [NADPH--hemoprotein reductase] + O2 = 20-hydroxy-(5Z,8Z,11Z,14Z)-eicosatetraenoate + oxidized [NADPH--hemoprotein reductase] + H2O + H(+)</text>
        <dbReference type="Rhea" id="RHEA:39755"/>
        <dbReference type="Rhea" id="RHEA-COMP:11964"/>
        <dbReference type="Rhea" id="RHEA-COMP:11965"/>
        <dbReference type="ChEBI" id="CHEBI:15377"/>
        <dbReference type="ChEBI" id="CHEBI:15378"/>
        <dbReference type="ChEBI" id="CHEBI:15379"/>
        <dbReference type="ChEBI" id="CHEBI:32395"/>
        <dbReference type="ChEBI" id="CHEBI:57618"/>
        <dbReference type="ChEBI" id="CHEBI:58210"/>
        <dbReference type="ChEBI" id="CHEBI:76624"/>
    </reaction>
    <physiologicalReaction direction="left-to-right" evidence="2">
        <dbReference type="Rhea" id="RHEA:39756"/>
    </physiologicalReaction>
</comment>
<comment type="catalytic activity">
    <reaction evidence="2">
        <text>N-[(5Z,8Z,11Z,14Z)-eicosatetraenoyl]-serotonin + reduced [NADPH--hemoprotein reductase] + O2 = 2-oxo-N-[(5Z,8Z,11Z,14Z)-eicosatetraenoyl]-serotonin + oxidized [NADPH--hemoprotein reductase] + H2O + H(+)</text>
        <dbReference type="Rhea" id="RHEA:50296"/>
        <dbReference type="Rhea" id="RHEA-COMP:11964"/>
        <dbReference type="Rhea" id="RHEA-COMP:11965"/>
        <dbReference type="ChEBI" id="CHEBI:15377"/>
        <dbReference type="ChEBI" id="CHEBI:15378"/>
        <dbReference type="ChEBI" id="CHEBI:15379"/>
        <dbReference type="ChEBI" id="CHEBI:57618"/>
        <dbReference type="ChEBI" id="CHEBI:58210"/>
        <dbReference type="ChEBI" id="CHEBI:132255"/>
        <dbReference type="ChEBI" id="CHEBI:132256"/>
    </reaction>
    <physiologicalReaction direction="left-to-right" evidence="2">
        <dbReference type="Rhea" id="RHEA:50297"/>
    </physiologicalReaction>
</comment>
<comment type="cofactor">
    <cofactor evidence="2">
        <name>heme</name>
        <dbReference type="ChEBI" id="CHEBI:30413"/>
    </cofactor>
</comment>
<comment type="subcellular location">
    <subcellularLocation>
        <location evidence="4">Endoplasmic reticulum membrane</location>
        <topology evidence="3">Multi-pass membrane protein</topology>
    </subcellularLocation>
    <subcellularLocation>
        <location evidence="4">Microsome membrane</location>
        <topology evidence="3">Multi-pass membrane protein</topology>
    </subcellularLocation>
    <subcellularLocation>
        <location evidence="2">Mitochondrion inner membrane</location>
        <topology evidence="3">Multi-pass membrane protein</topology>
    </subcellularLocation>
</comment>
<comment type="tissue specificity">
    <text evidence="4">Specifically expressed in thymus and brain. In brain, expressed in cortex, cerebellum, olfactory bulbs, pons and medulla and the limbic structures (at protein level).</text>
</comment>
<comment type="similarity">
    <text evidence="5">Belongs to the cytochrome P450 family.</text>
</comment>
<dbReference type="EC" id="1.14.14.80" evidence="2"/>
<dbReference type="EMBL" id="BC097442">
    <property type="protein sequence ID" value="AAH97442.1"/>
    <property type="molecule type" value="mRNA"/>
</dbReference>
<dbReference type="RefSeq" id="NP_001019950.1">
    <property type="nucleotide sequence ID" value="NM_001024779.1"/>
</dbReference>
<dbReference type="RefSeq" id="NP_001380742.1">
    <property type="nucleotide sequence ID" value="NM_001393813.2"/>
</dbReference>
<dbReference type="RefSeq" id="XP_006233372.1">
    <property type="nucleotide sequence ID" value="XM_006233310.3"/>
</dbReference>
<dbReference type="SMR" id="Q4V8D1"/>
<dbReference type="FunCoup" id="Q4V8D1">
    <property type="interactions" value="378"/>
</dbReference>
<dbReference type="STRING" id="10116.ENSRNOP00000069228"/>
<dbReference type="PhosphoSitePlus" id="Q4V8D1"/>
<dbReference type="PaxDb" id="10116-ENSRNOP00000052433"/>
<dbReference type="Ensembl" id="ENSRNOT00000055570.4">
    <property type="protein sequence ID" value="ENSRNOP00000052433.2"/>
    <property type="gene ID" value="ENSRNOG00000011053.8"/>
</dbReference>
<dbReference type="GeneID" id="310848"/>
<dbReference type="AGR" id="RGD:1309433"/>
<dbReference type="RGD" id="1309433">
    <property type="gene designation" value="Cyp2u1"/>
</dbReference>
<dbReference type="eggNOG" id="KOG0156">
    <property type="taxonomic scope" value="Eukaryota"/>
</dbReference>
<dbReference type="GeneTree" id="ENSGT00940000157714"/>
<dbReference type="HOGENOM" id="CLU_001570_22_0_1"/>
<dbReference type="InParanoid" id="Q4V8D1"/>
<dbReference type="OMA" id="EPCIQQG"/>
<dbReference type="OrthoDB" id="1844152at2759"/>
<dbReference type="PhylomeDB" id="Q4V8D1"/>
<dbReference type="TreeFam" id="TF352043"/>
<dbReference type="Reactome" id="R-RNO-211958">
    <property type="pathway name" value="Miscellaneous substrates"/>
</dbReference>
<dbReference type="Reactome" id="R-RNO-2142816">
    <property type="pathway name" value="Synthesis of (16-20)-hydroxyeicosatetraenoic acids (HETE)"/>
</dbReference>
<dbReference type="PRO" id="PR:Q4V8D1"/>
<dbReference type="Proteomes" id="UP000002494">
    <property type="component" value="Chromosome 2"/>
</dbReference>
<dbReference type="Bgee" id="ENSRNOG00000011053">
    <property type="expression patterns" value="Expressed in thymus and 18 other cell types or tissues"/>
</dbReference>
<dbReference type="GO" id="GO:0005737">
    <property type="term" value="C:cytoplasm"/>
    <property type="evidence" value="ECO:0000318"/>
    <property type="project" value="GO_Central"/>
</dbReference>
<dbReference type="GO" id="GO:0005789">
    <property type="term" value="C:endoplasmic reticulum membrane"/>
    <property type="evidence" value="ECO:0007669"/>
    <property type="project" value="UniProtKB-SubCell"/>
</dbReference>
<dbReference type="GO" id="GO:0043231">
    <property type="term" value="C:intracellular membrane-bounded organelle"/>
    <property type="evidence" value="ECO:0000318"/>
    <property type="project" value="GO_Central"/>
</dbReference>
<dbReference type="GO" id="GO:0005743">
    <property type="term" value="C:mitochondrial inner membrane"/>
    <property type="evidence" value="ECO:0007669"/>
    <property type="project" value="UniProtKB-SubCell"/>
</dbReference>
<dbReference type="GO" id="GO:0052869">
    <property type="term" value="F:arachidonate omega-hydroxylase activity"/>
    <property type="evidence" value="ECO:0000266"/>
    <property type="project" value="RGD"/>
</dbReference>
<dbReference type="GO" id="GO:0020037">
    <property type="term" value="F:heme binding"/>
    <property type="evidence" value="ECO:0000318"/>
    <property type="project" value="GO_Central"/>
</dbReference>
<dbReference type="GO" id="GO:0005506">
    <property type="term" value="F:iron ion binding"/>
    <property type="evidence" value="ECO:0007669"/>
    <property type="project" value="InterPro"/>
</dbReference>
<dbReference type="GO" id="GO:0102033">
    <property type="term" value="F:long-chain fatty acid omega-hydroxylase activity"/>
    <property type="evidence" value="ECO:0007669"/>
    <property type="project" value="UniProtKB-EC"/>
</dbReference>
<dbReference type="GO" id="GO:0016712">
    <property type="term" value="F:oxidoreductase activity, acting on paired donors, with incorporation or reduction of molecular oxygen, reduced flavin or flavoprotein as one donor, and incorporation of one atom of oxygen"/>
    <property type="evidence" value="ECO:0000318"/>
    <property type="project" value="GO_Central"/>
</dbReference>
<dbReference type="GO" id="GO:0008395">
    <property type="term" value="F:steroid hydroxylase activity"/>
    <property type="evidence" value="ECO:0000318"/>
    <property type="project" value="GO_Central"/>
</dbReference>
<dbReference type="GO" id="GO:0097267">
    <property type="term" value="P:omega-hydroxylase P450 pathway"/>
    <property type="evidence" value="ECO:0000266"/>
    <property type="project" value="RGD"/>
</dbReference>
<dbReference type="GO" id="GO:0006082">
    <property type="term" value="P:organic acid metabolic process"/>
    <property type="evidence" value="ECO:0000318"/>
    <property type="project" value="GO_Central"/>
</dbReference>
<dbReference type="GO" id="GO:0006805">
    <property type="term" value="P:xenobiotic metabolic process"/>
    <property type="evidence" value="ECO:0000318"/>
    <property type="project" value="GO_Central"/>
</dbReference>
<dbReference type="CDD" id="cd20666">
    <property type="entry name" value="CYP2U1"/>
    <property type="match status" value="1"/>
</dbReference>
<dbReference type="FunFam" id="1.10.630.10:FF:000017">
    <property type="entry name" value="cytochrome P450 2U1 isoform X1"/>
    <property type="match status" value="1"/>
</dbReference>
<dbReference type="Gene3D" id="1.10.630.10">
    <property type="entry name" value="Cytochrome P450"/>
    <property type="match status" value="1"/>
</dbReference>
<dbReference type="InterPro" id="IPR001128">
    <property type="entry name" value="Cyt_P450"/>
</dbReference>
<dbReference type="InterPro" id="IPR017972">
    <property type="entry name" value="Cyt_P450_CS"/>
</dbReference>
<dbReference type="InterPro" id="IPR002401">
    <property type="entry name" value="Cyt_P450_E_grp-I"/>
</dbReference>
<dbReference type="InterPro" id="IPR036396">
    <property type="entry name" value="Cyt_P450_sf"/>
</dbReference>
<dbReference type="InterPro" id="IPR050182">
    <property type="entry name" value="Cytochrome_P450_fam2"/>
</dbReference>
<dbReference type="PANTHER" id="PTHR24300:SF364">
    <property type="entry name" value="CYTOCHROME P450 2U1"/>
    <property type="match status" value="1"/>
</dbReference>
<dbReference type="PANTHER" id="PTHR24300">
    <property type="entry name" value="CYTOCHROME P450 508A4-RELATED"/>
    <property type="match status" value="1"/>
</dbReference>
<dbReference type="Pfam" id="PF00067">
    <property type="entry name" value="p450"/>
    <property type="match status" value="1"/>
</dbReference>
<dbReference type="PRINTS" id="PR00463">
    <property type="entry name" value="EP450I"/>
</dbReference>
<dbReference type="PRINTS" id="PR00385">
    <property type="entry name" value="P450"/>
</dbReference>
<dbReference type="SUPFAM" id="SSF48264">
    <property type="entry name" value="Cytochrome P450"/>
    <property type="match status" value="1"/>
</dbReference>
<dbReference type="PROSITE" id="PS00086">
    <property type="entry name" value="CYTOCHROME_P450"/>
    <property type="match status" value="1"/>
</dbReference>
<reference key="1">
    <citation type="journal article" date="2004" name="Genome Res.">
        <title>The status, quality, and expansion of the NIH full-length cDNA project: the Mammalian Gene Collection (MGC).</title>
        <authorList>
            <consortium name="The MGC Project Team"/>
        </authorList>
    </citation>
    <scope>NUCLEOTIDE SEQUENCE [LARGE SCALE MRNA]</scope>
    <source>
        <tissue>Testis</tissue>
    </source>
</reference>
<reference key="2">
    <citation type="journal article" date="2004" name="Biochem. Biophys. Res. Commun.">
        <title>Characterization and tissue distribution of a novel human cytochrome P450-CYP2U1.</title>
        <authorList>
            <person name="Karlgren M."/>
            <person name="Backlund M."/>
            <person name="Johansson I."/>
            <person name="Oscarson M."/>
            <person name="Ingelman-Sundberg M."/>
        </authorList>
    </citation>
    <scope>SUBCELLULAR LOCATION</scope>
    <scope>TISSUE SPECIFICITY</scope>
</reference>
<keyword id="KW-0256">Endoplasmic reticulum</keyword>
<keyword id="KW-0349">Heme</keyword>
<keyword id="KW-0408">Iron</keyword>
<keyword id="KW-0443">Lipid metabolism</keyword>
<keyword id="KW-0472">Membrane</keyword>
<keyword id="KW-0479">Metal-binding</keyword>
<keyword id="KW-0492">Microsome</keyword>
<keyword id="KW-0496">Mitochondrion</keyword>
<keyword id="KW-0999">Mitochondrion inner membrane</keyword>
<keyword id="KW-0503">Monooxygenase</keyword>
<keyword id="KW-0560">Oxidoreductase</keyword>
<keyword id="KW-1185">Reference proteome</keyword>
<keyword id="KW-0812">Transmembrane</keyword>
<keyword id="KW-1133">Transmembrane helix</keyword>
<gene>
    <name type="primary">Cyp2u1</name>
</gene>
<organism>
    <name type="scientific">Rattus norvegicus</name>
    <name type="common">Rat</name>
    <dbReference type="NCBI Taxonomy" id="10116"/>
    <lineage>
        <taxon>Eukaryota</taxon>
        <taxon>Metazoa</taxon>
        <taxon>Chordata</taxon>
        <taxon>Craniata</taxon>
        <taxon>Vertebrata</taxon>
        <taxon>Euteleostomi</taxon>
        <taxon>Mammalia</taxon>
        <taxon>Eutheria</taxon>
        <taxon>Euarchontoglires</taxon>
        <taxon>Glires</taxon>
        <taxon>Rodentia</taxon>
        <taxon>Myomorpha</taxon>
        <taxon>Muroidea</taxon>
        <taxon>Muridae</taxon>
        <taxon>Murinae</taxon>
        <taxon>Rattus</taxon>
    </lineage>
</organism>
<feature type="chain" id="PRO_0000291758" description="Cytochrome P450 2U1">
    <location>
        <begin position="1"/>
        <end position="530"/>
    </location>
</feature>
<feature type="transmembrane region" description="Helical" evidence="3">
    <location>
        <begin position="21"/>
        <end position="41"/>
    </location>
</feature>
<feature type="transmembrane region" description="Helical" evidence="3">
    <location>
        <begin position="99"/>
        <end position="119"/>
    </location>
</feature>
<feature type="transmembrane region" description="Helical" evidence="3">
    <location>
        <begin position="247"/>
        <end position="267"/>
    </location>
</feature>
<feature type="transmembrane region" description="Helical" evidence="3">
    <location>
        <begin position="328"/>
        <end position="348"/>
    </location>
</feature>
<feature type="transmembrane region" description="Helical" evidence="3">
    <location>
        <begin position="481"/>
        <end position="501"/>
    </location>
</feature>
<feature type="binding site" description="axial binding residue" evidence="1">
    <location>
        <position position="476"/>
    </location>
    <ligand>
        <name>heme</name>
        <dbReference type="ChEBI" id="CHEBI:30413"/>
    </ligand>
    <ligandPart>
        <name>Fe</name>
        <dbReference type="ChEBI" id="CHEBI:18248"/>
    </ligandPart>
</feature>
<protein>
    <recommendedName>
        <fullName>Cytochrome P450 2U1</fullName>
    </recommendedName>
    <alternativeName>
        <fullName>Long-chain fatty acid omega-monooxygenase</fullName>
        <ecNumber evidence="2">1.14.14.80</ecNumber>
    </alternativeName>
</protein>
<proteinExistence type="evidence at protein level"/>
<accession>Q4V8D1</accession>
<evidence type="ECO:0000250" key="1"/>
<evidence type="ECO:0000250" key="2">
    <source>
        <dbReference type="UniProtKB" id="Q7Z449"/>
    </source>
</evidence>
<evidence type="ECO:0000255" key="3"/>
<evidence type="ECO:0000269" key="4">
    <source>
    </source>
</evidence>
<evidence type="ECO:0000305" key="5"/>
<name>CP2U1_RAT</name>